<name>RPOA_PSARU</name>
<geneLocation type="chloroplast"/>
<protein>
    <recommendedName>
        <fullName evidence="1">DNA-directed RNA polymerase subunit alpha</fullName>
        <shortName evidence="1">PEP</shortName>
        <ecNumber evidence="1">2.7.7.6</ecNumber>
    </recommendedName>
    <alternativeName>
        <fullName evidence="1">Plastid-encoded RNA polymerase subunit alpha</fullName>
        <shortName evidence="1">RNA polymerase subunit alpha</shortName>
    </alternativeName>
</protein>
<sequence length="339" mass="39041">MVREEVAGSTQTLQWKCVESRVDSKRLYYGRFILSPLRKGQADTVGIALRRALLGEIEGTCITRAKFGXVPHEYSTIAGIEESVQEILLNLKEIVLRSNLYGVRDASICVKGPRYITAQDIILPPSVEIVDTXQPIANLTEPIDFCIDLQIKRDRGYQTELRKNYQDGSYPIDAVSMPVRNVNYSIFSCGNGNEKHEILFLEIWTNGSLTPKEALYEASRNLIDLFLPFLHAEEEGTSFEENKNRFTPPLFTFQKRLTNLKKNKKGIPLNYIFIDQLELTSRTYNCLKRANIHTLLDLLSKTEEDLMRIDSFRMEDRKHIWDTLEKHLPIDLLKNKLSF</sequence>
<feature type="chain" id="PRO_0000175486" description="DNA-directed RNA polymerase subunit alpha">
    <location>
        <begin position="1"/>
        <end position="339"/>
    </location>
</feature>
<feature type="region of interest" description="Alpha N-terminal domain (alpha-NTD)" evidence="1">
    <location>
        <begin position="1"/>
        <end position="233"/>
    </location>
</feature>
<feature type="region of interest" description="Alpha C-terminal domain (alpha-CTD)" evidence="1">
    <location>
        <begin position="264"/>
        <end position="339"/>
    </location>
</feature>
<organism>
    <name type="scientific">Psathyrostachys rupestris</name>
    <name type="common">Hordeum rupestre</name>
    <dbReference type="NCBI Taxonomy" id="58938"/>
    <lineage>
        <taxon>Eukaryota</taxon>
        <taxon>Viridiplantae</taxon>
        <taxon>Streptophyta</taxon>
        <taxon>Embryophyta</taxon>
        <taxon>Tracheophyta</taxon>
        <taxon>Spermatophyta</taxon>
        <taxon>Magnoliopsida</taxon>
        <taxon>Liliopsida</taxon>
        <taxon>Poales</taxon>
        <taxon>Poaceae</taxon>
        <taxon>BOP clade</taxon>
        <taxon>Pooideae</taxon>
        <taxon>Triticodae</taxon>
        <taxon>Triticeae</taxon>
        <taxon>Hordeinae</taxon>
        <taxon>Psathyrostachys</taxon>
    </lineage>
</organism>
<dbReference type="EC" id="2.7.7.6" evidence="1"/>
<dbReference type="EMBL" id="Z77755">
    <property type="protein sequence ID" value="CAB01342.1"/>
    <property type="molecule type" value="Genomic_DNA"/>
</dbReference>
<dbReference type="GO" id="GO:0009507">
    <property type="term" value="C:chloroplast"/>
    <property type="evidence" value="ECO:0007669"/>
    <property type="project" value="UniProtKB-SubCell"/>
</dbReference>
<dbReference type="GO" id="GO:0000428">
    <property type="term" value="C:DNA-directed RNA polymerase complex"/>
    <property type="evidence" value="ECO:0007669"/>
    <property type="project" value="UniProtKB-KW"/>
</dbReference>
<dbReference type="GO" id="GO:0005739">
    <property type="term" value="C:mitochondrion"/>
    <property type="evidence" value="ECO:0007669"/>
    <property type="project" value="GOC"/>
</dbReference>
<dbReference type="GO" id="GO:0003677">
    <property type="term" value="F:DNA binding"/>
    <property type="evidence" value="ECO:0007669"/>
    <property type="project" value="UniProtKB-UniRule"/>
</dbReference>
<dbReference type="GO" id="GO:0003899">
    <property type="term" value="F:DNA-directed RNA polymerase activity"/>
    <property type="evidence" value="ECO:0007669"/>
    <property type="project" value="UniProtKB-UniRule"/>
</dbReference>
<dbReference type="GO" id="GO:0046983">
    <property type="term" value="F:protein dimerization activity"/>
    <property type="evidence" value="ECO:0007669"/>
    <property type="project" value="InterPro"/>
</dbReference>
<dbReference type="GO" id="GO:0006351">
    <property type="term" value="P:DNA-templated transcription"/>
    <property type="evidence" value="ECO:0007669"/>
    <property type="project" value="UniProtKB-UniRule"/>
</dbReference>
<dbReference type="CDD" id="cd06928">
    <property type="entry name" value="RNAP_alpha_NTD"/>
    <property type="match status" value="1"/>
</dbReference>
<dbReference type="FunFam" id="2.170.120.12:FF:000001">
    <property type="entry name" value="DNA-directed RNA polymerase subunit alpha"/>
    <property type="match status" value="1"/>
</dbReference>
<dbReference type="Gene3D" id="1.10.150.20">
    <property type="entry name" value="5' to 3' exonuclease, C-terminal subdomain"/>
    <property type="match status" value="1"/>
</dbReference>
<dbReference type="Gene3D" id="2.170.120.12">
    <property type="entry name" value="DNA-directed RNA polymerase, insert domain"/>
    <property type="match status" value="1"/>
</dbReference>
<dbReference type="Gene3D" id="3.30.1360.10">
    <property type="entry name" value="RNA polymerase, RBP11-like subunit"/>
    <property type="match status" value="1"/>
</dbReference>
<dbReference type="HAMAP" id="MF_00059">
    <property type="entry name" value="RNApol_bact_RpoA"/>
    <property type="match status" value="1"/>
</dbReference>
<dbReference type="InterPro" id="IPR011262">
    <property type="entry name" value="DNA-dir_RNA_pol_insert"/>
</dbReference>
<dbReference type="InterPro" id="IPR011263">
    <property type="entry name" value="DNA-dir_RNA_pol_RpoA/D/Rpb3"/>
</dbReference>
<dbReference type="InterPro" id="IPR011773">
    <property type="entry name" value="DNA-dir_RpoA"/>
</dbReference>
<dbReference type="InterPro" id="IPR036603">
    <property type="entry name" value="RBP11-like"/>
</dbReference>
<dbReference type="InterPro" id="IPR011260">
    <property type="entry name" value="RNAP_asu_C"/>
</dbReference>
<dbReference type="InterPro" id="IPR036643">
    <property type="entry name" value="RNApol_insert_sf"/>
</dbReference>
<dbReference type="NCBIfam" id="TIGR02027">
    <property type="entry name" value="rpoA"/>
    <property type="match status" value="1"/>
</dbReference>
<dbReference type="Pfam" id="PF01000">
    <property type="entry name" value="RNA_pol_A_bac"/>
    <property type="match status" value="1"/>
</dbReference>
<dbReference type="Pfam" id="PF03118">
    <property type="entry name" value="RNA_pol_A_CTD"/>
    <property type="match status" value="1"/>
</dbReference>
<dbReference type="Pfam" id="PF01193">
    <property type="entry name" value="RNA_pol_L"/>
    <property type="match status" value="1"/>
</dbReference>
<dbReference type="SMART" id="SM00662">
    <property type="entry name" value="RPOLD"/>
    <property type="match status" value="1"/>
</dbReference>
<dbReference type="SUPFAM" id="SSF47789">
    <property type="entry name" value="C-terminal domain of RNA polymerase alpha subunit"/>
    <property type="match status" value="1"/>
</dbReference>
<dbReference type="SUPFAM" id="SSF56553">
    <property type="entry name" value="Insert subdomain of RNA polymerase alpha subunit"/>
    <property type="match status" value="1"/>
</dbReference>
<dbReference type="SUPFAM" id="SSF55257">
    <property type="entry name" value="RBP11-like subunits of RNA polymerase"/>
    <property type="match status" value="1"/>
</dbReference>
<reference key="1">
    <citation type="journal article" date="1997" name="Mol. Phylogenet. Evol.">
        <title>Phylogenetic analysis of the Triticeae (Poaceae) based on rpoA sequence data.</title>
        <authorList>
            <person name="Petersen G."/>
            <person name="Seberg O."/>
        </authorList>
    </citation>
    <scope>NUCLEOTIDE SEQUENCE [GENOMIC DNA]</scope>
    <source>
        <strain>Subsp. daghestanica / H6703</strain>
        <tissue>Leaf</tissue>
    </source>
</reference>
<gene>
    <name evidence="1" type="primary">rpoA</name>
</gene>
<comment type="function">
    <text evidence="1">DNA-dependent RNA polymerase catalyzes the transcription of DNA into RNA using the four ribonucleoside triphosphates as substrates.</text>
</comment>
<comment type="catalytic activity">
    <reaction evidence="1">
        <text>RNA(n) + a ribonucleoside 5'-triphosphate = RNA(n+1) + diphosphate</text>
        <dbReference type="Rhea" id="RHEA:21248"/>
        <dbReference type="Rhea" id="RHEA-COMP:14527"/>
        <dbReference type="Rhea" id="RHEA-COMP:17342"/>
        <dbReference type="ChEBI" id="CHEBI:33019"/>
        <dbReference type="ChEBI" id="CHEBI:61557"/>
        <dbReference type="ChEBI" id="CHEBI:140395"/>
        <dbReference type="EC" id="2.7.7.6"/>
    </reaction>
</comment>
<comment type="subunit">
    <text evidence="1">In plastids the minimal PEP RNA polymerase catalytic core is composed of four subunits: alpha, beta, beta', and beta''. When a (nuclear-encoded) sigma factor is associated with the core the holoenzyme is formed, which can initiate transcription.</text>
</comment>
<comment type="subcellular location">
    <subcellularLocation>
        <location>Plastid</location>
        <location>Chloroplast</location>
    </subcellularLocation>
</comment>
<comment type="domain">
    <text evidence="1">The N-terminal domain is essential for RNAP assembly and basal transcription, whereas the C-terminal domain is involved in interaction with transcriptional regulators and with upstream promoter elements.</text>
</comment>
<comment type="similarity">
    <text evidence="1">Belongs to the RNA polymerase alpha chain family.</text>
</comment>
<accession>P93960</accession>
<proteinExistence type="inferred from homology"/>
<keyword id="KW-0150">Chloroplast</keyword>
<keyword id="KW-0240">DNA-directed RNA polymerase</keyword>
<keyword id="KW-0548">Nucleotidyltransferase</keyword>
<keyword id="KW-0934">Plastid</keyword>
<keyword id="KW-0804">Transcription</keyword>
<keyword id="KW-0808">Transferase</keyword>
<evidence type="ECO:0000255" key="1">
    <source>
        <dbReference type="HAMAP-Rule" id="MF_00059"/>
    </source>
</evidence>